<gene>
    <name evidence="1" type="primary">katG1</name>
    <name type="ordered locus">Sama_3270</name>
</gene>
<proteinExistence type="inferred from homology"/>
<comment type="function">
    <text evidence="1">Bifunctional enzyme with both catalase and broad-spectrum peroxidase activity.</text>
</comment>
<comment type="catalytic activity">
    <reaction evidence="1">
        <text>H2O2 + AH2 = A + 2 H2O</text>
        <dbReference type="Rhea" id="RHEA:30275"/>
        <dbReference type="ChEBI" id="CHEBI:13193"/>
        <dbReference type="ChEBI" id="CHEBI:15377"/>
        <dbReference type="ChEBI" id="CHEBI:16240"/>
        <dbReference type="ChEBI" id="CHEBI:17499"/>
        <dbReference type="EC" id="1.11.1.21"/>
    </reaction>
</comment>
<comment type="catalytic activity">
    <reaction evidence="1">
        <text>2 H2O2 = O2 + 2 H2O</text>
        <dbReference type="Rhea" id="RHEA:20309"/>
        <dbReference type="ChEBI" id="CHEBI:15377"/>
        <dbReference type="ChEBI" id="CHEBI:15379"/>
        <dbReference type="ChEBI" id="CHEBI:16240"/>
        <dbReference type="EC" id="1.11.1.21"/>
    </reaction>
</comment>
<comment type="cofactor">
    <cofactor evidence="1">
        <name>heme b</name>
        <dbReference type="ChEBI" id="CHEBI:60344"/>
    </cofactor>
    <text evidence="1">Binds 1 heme b (iron(II)-protoporphyrin IX) group per dimer.</text>
</comment>
<comment type="subunit">
    <text evidence="1">Homodimer or homotetramer.</text>
</comment>
<comment type="PTM">
    <text evidence="1">Formation of the three residue Trp-Tyr-Met cross-link is important for the catalase, but not the peroxidase activity of the enzyme.</text>
</comment>
<comment type="similarity">
    <text evidence="1">Belongs to the peroxidase family. Peroxidase/catalase subfamily.</text>
</comment>
<dbReference type="EC" id="1.11.1.21" evidence="1"/>
<dbReference type="EMBL" id="CP000507">
    <property type="protein sequence ID" value="ABM01473.1"/>
    <property type="molecule type" value="Genomic_DNA"/>
</dbReference>
<dbReference type="RefSeq" id="WP_011761377.1">
    <property type="nucleotide sequence ID" value="NC_008700.1"/>
</dbReference>
<dbReference type="SMR" id="A1SAR6"/>
<dbReference type="STRING" id="326297.Sama_3270"/>
<dbReference type="PeroxiBase" id="3656">
    <property type="entry name" value="SamCP02_SB2B"/>
</dbReference>
<dbReference type="KEGG" id="saz:Sama_3270"/>
<dbReference type="eggNOG" id="COG0376">
    <property type="taxonomic scope" value="Bacteria"/>
</dbReference>
<dbReference type="HOGENOM" id="CLU_025424_2_0_6"/>
<dbReference type="OrthoDB" id="9759743at2"/>
<dbReference type="Proteomes" id="UP000009175">
    <property type="component" value="Chromosome"/>
</dbReference>
<dbReference type="GO" id="GO:0005829">
    <property type="term" value="C:cytosol"/>
    <property type="evidence" value="ECO:0007669"/>
    <property type="project" value="TreeGrafter"/>
</dbReference>
<dbReference type="GO" id="GO:0004096">
    <property type="term" value="F:catalase activity"/>
    <property type="evidence" value="ECO:0007669"/>
    <property type="project" value="UniProtKB-UniRule"/>
</dbReference>
<dbReference type="GO" id="GO:0020037">
    <property type="term" value="F:heme binding"/>
    <property type="evidence" value="ECO:0007669"/>
    <property type="project" value="InterPro"/>
</dbReference>
<dbReference type="GO" id="GO:0046872">
    <property type="term" value="F:metal ion binding"/>
    <property type="evidence" value="ECO:0007669"/>
    <property type="project" value="UniProtKB-KW"/>
</dbReference>
<dbReference type="GO" id="GO:0070301">
    <property type="term" value="P:cellular response to hydrogen peroxide"/>
    <property type="evidence" value="ECO:0007669"/>
    <property type="project" value="TreeGrafter"/>
</dbReference>
<dbReference type="GO" id="GO:0042744">
    <property type="term" value="P:hydrogen peroxide catabolic process"/>
    <property type="evidence" value="ECO:0007669"/>
    <property type="project" value="UniProtKB-KW"/>
</dbReference>
<dbReference type="CDD" id="cd00649">
    <property type="entry name" value="catalase_peroxidase_1"/>
    <property type="match status" value="1"/>
</dbReference>
<dbReference type="CDD" id="cd08200">
    <property type="entry name" value="catalase_peroxidase_2"/>
    <property type="match status" value="1"/>
</dbReference>
<dbReference type="FunFam" id="1.10.420.10:FF:000002">
    <property type="entry name" value="Catalase-peroxidase"/>
    <property type="match status" value="1"/>
</dbReference>
<dbReference type="FunFam" id="1.10.420.10:FF:000004">
    <property type="entry name" value="Catalase-peroxidase"/>
    <property type="match status" value="1"/>
</dbReference>
<dbReference type="FunFam" id="1.10.520.10:FF:000002">
    <property type="entry name" value="Catalase-peroxidase"/>
    <property type="match status" value="1"/>
</dbReference>
<dbReference type="Gene3D" id="1.10.520.10">
    <property type="match status" value="2"/>
</dbReference>
<dbReference type="Gene3D" id="1.10.420.10">
    <property type="entry name" value="Peroxidase, domain 2"/>
    <property type="match status" value="2"/>
</dbReference>
<dbReference type="HAMAP" id="MF_01961">
    <property type="entry name" value="Catal_peroxid"/>
    <property type="match status" value="1"/>
</dbReference>
<dbReference type="InterPro" id="IPR000763">
    <property type="entry name" value="Catalase_peroxidase"/>
</dbReference>
<dbReference type="InterPro" id="IPR002016">
    <property type="entry name" value="Haem_peroxidase"/>
</dbReference>
<dbReference type="InterPro" id="IPR010255">
    <property type="entry name" value="Haem_peroxidase_sf"/>
</dbReference>
<dbReference type="InterPro" id="IPR019794">
    <property type="entry name" value="Peroxidases_AS"/>
</dbReference>
<dbReference type="NCBIfam" id="TIGR00198">
    <property type="entry name" value="cat_per_HPI"/>
    <property type="match status" value="1"/>
</dbReference>
<dbReference type="NCBIfam" id="NF011635">
    <property type="entry name" value="PRK15061.1"/>
    <property type="match status" value="1"/>
</dbReference>
<dbReference type="PANTHER" id="PTHR30555:SF6">
    <property type="entry name" value="CATALASE-PEROXIDASE"/>
    <property type="match status" value="1"/>
</dbReference>
<dbReference type="PANTHER" id="PTHR30555">
    <property type="entry name" value="HYDROPEROXIDASE I, BIFUNCTIONAL CATALASE-PEROXIDASE"/>
    <property type="match status" value="1"/>
</dbReference>
<dbReference type="Pfam" id="PF00141">
    <property type="entry name" value="peroxidase"/>
    <property type="match status" value="2"/>
</dbReference>
<dbReference type="PRINTS" id="PR00460">
    <property type="entry name" value="BPEROXIDASE"/>
</dbReference>
<dbReference type="PRINTS" id="PR00458">
    <property type="entry name" value="PEROXIDASE"/>
</dbReference>
<dbReference type="SUPFAM" id="SSF48113">
    <property type="entry name" value="Heme-dependent peroxidases"/>
    <property type="match status" value="2"/>
</dbReference>
<dbReference type="PROSITE" id="PS00436">
    <property type="entry name" value="PEROXIDASE_2"/>
    <property type="match status" value="1"/>
</dbReference>
<dbReference type="PROSITE" id="PS50873">
    <property type="entry name" value="PEROXIDASE_4"/>
    <property type="match status" value="1"/>
</dbReference>
<organism>
    <name type="scientific">Shewanella amazonensis (strain ATCC BAA-1098 / SB2B)</name>
    <dbReference type="NCBI Taxonomy" id="326297"/>
    <lineage>
        <taxon>Bacteria</taxon>
        <taxon>Pseudomonadati</taxon>
        <taxon>Pseudomonadota</taxon>
        <taxon>Gammaproteobacteria</taxon>
        <taxon>Alteromonadales</taxon>
        <taxon>Shewanellaceae</taxon>
        <taxon>Shewanella</taxon>
    </lineage>
</organism>
<sequence length="718" mass="79499">MSNEGKCPVMHGGATSATQADNHWWPKALNLDILHQHDSKTNPMAPGFNYREALKGLDVEALKQDLKALMTDSQAWWPADWGHYGGLMIRMAWHSAGTYRIADGRGGGGHGAQRFAPLNSWPDNGNLDKARRLLWPIKQKYGNKVSWADLMILAGNMAYESMGLKTFGFAFGREDIWHPEKDTYWGAEKEWLAPSGGANSRYSGVRDLQNPLAAVMMGLIYVNPEGVDGNPDPLKTAQDMRVTFARMAMNDEETVALTAGGHTVGKAHGNGNAANLGPEPEAAPLEEQGFGWMNHQSRGIGRNTVTSGIEGAWTTHPTRWDNGYFHLLFSYDWALTKSPAGAWQWEPVNIREEDKPVDVEDPNIRSNPMMTDADMALKMDPDYRRIAERFFHDPDYFADTFARAWFKLTHRDMGPKSRYFGPDVPAEDLIWQDPVPKGNSQYDPEAVKARIAGTGLGAAELVATAWDSARTYRNSDKRGGANGARIRLLPQKDWVANEPARLARVLELLTPIASDMGVSIADTLVLGGNLGVELAAKAAGFNIKVPFIPGRGDASQAQTDIDSFEVLEPLADGFRNWQKQDFVVTPEEMLLDRAQLMGLSAPEMTVLIGGMRAMAVNHGGTTHGVLTDNPGSLSNDFFVNLTDMSYRWKPVANNLYEICDRASGQKKWTATRVDLVFGSNSVLRAYAEYYAQDDNKETFVKDFVTAWCKVMNADRFDA</sequence>
<protein>
    <recommendedName>
        <fullName evidence="1">Catalase-peroxidase 1</fullName>
        <shortName evidence="1">CP 1</shortName>
        <ecNumber evidence="1">1.11.1.21</ecNumber>
    </recommendedName>
    <alternativeName>
        <fullName evidence="1">Peroxidase/catalase 1</fullName>
    </alternativeName>
</protein>
<accession>A1SAR6</accession>
<feature type="chain" id="PRO_0000354913" description="Catalase-peroxidase 1">
    <location>
        <begin position="1"/>
        <end position="718"/>
    </location>
</feature>
<feature type="active site" description="Proton acceptor" evidence="1">
    <location>
        <position position="94"/>
    </location>
</feature>
<feature type="binding site" description="axial binding residue" evidence="1">
    <location>
        <position position="262"/>
    </location>
    <ligand>
        <name>heme b</name>
        <dbReference type="ChEBI" id="CHEBI:60344"/>
    </ligand>
    <ligandPart>
        <name>Fe</name>
        <dbReference type="ChEBI" id="CHEBI:18248"/>
    </ligandPart>
</feature>
<feature type="site" description="Transition state stabilizer" evidence="1">
    <location>
        <position position="90"/>
    </location>
</feature>
<feature type="cross-link" description="Tryptophyl-tyrosyl-methioninium (Trp-Tyr) (with M-247)" evidence="1">
    <location>
        <begin position="93"/>
        <end position="221"/>
    </location>
</feature>
<feature type="cross-link" description="Tryptophyl-tyrosyl-methioninium (Tyr-Met) (with W-93)" evidence="1">
    <location>
        <begin position="221"/>
        <end position="247"/>
    </location>
</feature>
<reference key="1">
    <citation type="submission" date="2006-12" db="EMBL/GenBank/DDBJ databases">
        <title>Complete sequence of Shewanella amazonensis SB2B.</title>
        <authorList>
            <consortium name="US DOE Joint Genome Institute"/>
            <person name="Copeland A."/>
            <person name="Lucas S."/>
            <person name="Lapidus A."/>
            <person name="Barry K."/>
            <person name="Detter J.C."/>
            <person name="Glavina del Rio T."/>
            <person name="Hammon N."/>
            <person name="Israni S."/>
            <person name="Dalin E."/>
            <person name="Tice H."/>
            <person name="Pitluck S."/>
            <person name="Munk A.C."/>
            <person name="Brettin T."/>
            <person name="Bruce D."/>
            <person name="Han C."/>
            <person name="Tapia R."/>
            <person name="Gilna P."/>
            <person name="Schmutz J."/>
            <person name="Larimer F."/>
            <person name="Land M."/>
            <person name="Hauser L."/>
            <person name="Kyrpides N."/>
            <person name="Mikhailova N."/>
            <person name="Fredrickson J."/>
            <person name="Richardson P."/>
        </authorList>
    </citation>
    <scope>NUCLEOTIDE SEQUENCE [LARGE SCALE GENOMIC DNA]</scope>
    <source>
        <strain>ATCC BAA-1098 / SB2B</strain>
    </source>
</reference>
<name>KATG1_SHEAM</name>
<evidence type="ECO:0000255" key="1">
    <source>
        <dbReference type="HAMAP-Rule" id="MF_01961"/>
    </source>
</evidence>
<keyword id="KW-0349">Heme</keyword>
<keyword id="KW-0376">Hydrogen peroxide</keyword>
<keyword id="KW-0408">Iron</keyword>
<keyword id="KW-0479">Metal-binding</keyword>
<keyword id="KW-0560">Oxidoreductase</keyword>
<keyword id="KW-0575">Peroxidase</keyword>
<keyword id="KW-1185">Reference proteome</keyword>